<proteinExistence type="evidence at protein level"/>
<reference key="1">
    <citation type="journal article" date="1989" name="J. Bacteriol.">
        <title>Cloning and nucleotide sequence of braC, the structural gene for the leucine-, isoleucine-, and valine-binding protein of Pseudomonas aeruginosa PAO.</title>
        <authorList>
            <person name="Hoshino T."/>
            <person name="Kose K."/>
        </authorList>
    </citation>
    <scope>NUCLEOTIDE SEQUENCE [GENOMIC DNA]</scope>
    <scope>PROTEIN SEQUENCE OF 27-39</scope>
    <scope>FUNCTION</scope>
    <source>
        <strain>PAO</strain>
    </source>
</reference>
<reference key="2">
    <citation type="journal article" date="1990" name="J. Bacteriol.">
        <title>Cloning, nucleotide sequences, and identification of products of the Pseudomonas aeruginosa PAO bra genes, which encode the high-affinity branched-chain amino acid transport system.</title>
        <authorList>
            <person name="Hoshino T."/>
            <person name="Kose K."/>
        </authorList>
    </citation>
    <scope>NUCLEOTIDE SEQUENCE [GENOMIC DNA]</scope>
    <source>
        <strain>PAO</strain>
    </source>
</reference>
<reference key="3">
    <citation type="journal article" date="2000" name="Nature">
        <title>Complete genome sequence of Pseudomonas aeruginosa PAO1, an opportunistic pathogen.</title>
        <authorList>
            <person name="Stover C.K."/>
            <person name="Pham X.-Q.T."/>
            <person name="Erwin A.L."/>
            <person name="Mizoguchi S.D."/>
            <person name="Warrener P."/>
            <person name="Hickey M.J."/>
            <person name="Brinkman F.S.L."/>
            <person name="Hufnagle W.O."/>
            <person name="Kowalik D.J."/>
            <person name="Lagrou M."/>
            <person name="Garber R.L."/>
            <person name="Goltry L."/>
            <person name="Tolentino E."/>
            <person name="Westbrock-Wadman S."/>
            <person name="Yuan Y."/>
            <person name="Brody L.L."/>
            <person name="Coulter S.N."/>
            <person name="Folger K.R."/>
            <person name="Kas A."/>
            <person name="Larbig K."/>
            <person name="Lim R.M."/>
            <person name="Smith K.A."/>
            <person name="Spencer D.H."/>
            <person name="Wong G.K.-S."/>
            <person name="Wu Z."/>
            <person name="Paulsen I.T."/>
            <person name="Reizer J."/>
            <person name="Saier M.H. Jr."/>
            <person name="Hancock R.E.W."/>
            <person name="Lory S."/>
            <person name="Olson M.V."/>
        </authorList>
    </citation>
    <scope>NUCLEOTIDE SEQUENCE [LARGE SCALE GENOMIC DNA]</scope>
    <source>
        <strain>ATCC 15692 / DSM 22644 / CIP 104116 / JCM 14847 / LMG 12228 / 1C / PRS 101 / PAO1</strain>
    </source>
</reference>
<reference key="4">
    <citation type="journal article" date="2019" name="Int. J. Mol. Sci.">
        <title>Determination of Ligand Profiles for Pseudomonas aeruginosa Solute Binding Proteins.</title>
        <authorList>
            <person name="Fernandez M."/>
            <person name="Rico-Jimenez M."/>
            <person name="Ortega A."/>
            <person name="Daddaoua A."/>
            <person name="Garcia Garcia A.I."/>
            <person name="Martin-Mora D."/>
            <person name="Torres N.M."/>
            <person name="Tajuelo A."/>
            <person name="Matilla M.A."/>
            <person name="Krell T."/>
        </authorList>
    </citation>
    <scope>FUNCTION AS A BINDING PROTEIN</scope>
    <source>
        <strain>ATCC 15692 / DSM 22644 / CIP 104116 / JCM 14847 / LMG 12228 / 1C / PRS 101 / PAO1</strain>
    </source>
</reference>
<accession>P21175</accession>
<comment type="function">
    <text evidence="2 3">Component of the high-affinity leucine, isoleucine, valine transport system I (LIV-I), which is operative without Na(+) and is specific for alanine and threonine, in addition to branched-chain amino acids (PubMed:2509433). Binds L-leucine, L-isoleucine, L-valine, L-threonine and L-alanine with nanomolar affinities. Can also bind L-homoserine with high affinity (PubMed:31627455).</text>
</comment>
<comment type="subcellular location">
    <subcellularLocation>
        <location evidence="1">Periplasm</location>
    </subcellularLocation>
</comment>
<comment type="similarity">
    <text evidence="4">Belongs to the leucine-binding protein family.</text>
</comment>
<name>BRAC_PSEAE</name>
<sequence>MKKGTQRLSRLFAAMAIAGFASYSMAADTIKIALAGPVTGPVAQYGDMQRAGALMAIEQINKAGGVNGAQLEGVIYDDACDPKQAVAVANKVVNDGVKFVVGHVCSSSTQPATDIYEDEGVLMITPSATAPEITSRGYKLIFRTIGLDNMQGPVAGKFIAERYKDKTIAVLHDKQQYGEGIATEVKKTVEDAGIKVAVFEGLNAGDKDFNALISKLKKAGVQFVYFGGYHPEMGLLLRQAKQAGLDARFMGPEGVGNSEITAIAGDASEGMLATLPRAFEQDPKNKALIDAFKAKNQDPSGIFVLPAYSAVTVIAKGIEKAGEADPEKVAEALRANTFETPTGNLGFDEKGDLKNFDFTVYEWHKDATRTEVK</sequence>
<feature type="signal peptide" evidence="2">
    <location>
        <begin position="1"/>
        <end position="26"/>
    </location>
</feature>
<feature type="chain" id="PRO_0000017698" description="Leucine-, isoleucine-, valine-, threonine-, and alanine-binding protein">
    <location>
        <begin position="27"/>
        <end position="373"/>
    </location>
</feature>
<feature type="disulfide bond">
    <location>
        <begin position="80"/>
        <end position="105"/>
    </location>
</feature>
<feature type="sequence conflict" description="In Ref. 1; AAA88430." evidence="4" ref="1">
    <original>D</original>
    <variation>V</variation>
    <location>
        <position position="165"/>
    </location>
</feature>
<gene>
    <name type="primary">braC</name>
    <name type="ordered locus">PA1074</name>
</gene>
<evidence type="ECO:0000250" key="1"/>
<evidence type="ECO:0000269" key="2">
    <source>
    </source>
</evidence>
<evidence type="ECO:0000269" key="3">
    <source>
    </source>
</evidence>
<evidence type="ECO:0000305" key="4"/>
<dbReference type="EMBL" id="M31071">
    <property type="protein sequence ID" value="AAA88430.1"/>
    <property type="molecule type" value="Genomic_DNA"/>
</dbReference>
<dbReference type="EMBL" id="D90223">
    <property type="protein sequence ID" value="BAA14254.1"/>
    <property type="molecule type" value="Genomic_DNA"/>
</dbReference>
<dbReference type="EMBL" id="AE004091">
    <property type="protein sequence ID" value="AAG04463.1"/>
    <property type="molecule type" value="Genomic_DNA"/>
</dbReference>
<dbReference type="PIR" id="A36125">
    <property type="entry name" value="A36125"/>
</dbReference>
<dbReference type="RefSeq" id="NP_249765.1">
    <property type="nucleotide sequence ID" value="NC_002516.2"/>
</dbReference>
<dbReference type="RefSeq" id="WP_003082136.1">
    <property type="nucleotide sequence ID" value="NZ_QZGE01000006.1"/>
</dbReference>
<dbReference type="SMR" id="P21175"/>
<dbReference type="FunCoup" id="P21175">
    <property type="interactions" value="340"/>
</dbReference>
<dbReference type="STRING" id="208964.PA1074"/>
<dbReference type="TCDB" id="3.A.1.4.8">
    <property type="family name" value="the atp-binding cassette (abc) superfamily"/>
</dbReference>
<dbReference type="PaxDb" id="208964-PA1074"/>
<dbReference type="GeneID" id="878501"/>
<dbReference type="KEGG" id="pae:PA1074"/>
<dbReference type="PATRIC" id="fig|208964.12.peg.1112"/>
<dbReference type="PseudoCAP" id="PA1074"/>
<dbReference type="HOGENOM" id="CLU_027128_6_0_6"/>
<dbReference type="InParanoid" id="P21175"/>
<dbReference type="OrthoDB" id="9768386at2"/>
<dbReference type="PhylomeDB" id="P21175"/>
<dbReference type="BioCyc" id="PAER208964:G1FZ6-1097-MONOMER"/>
<dbReference type="Proteomes" id="UP000002438">
    <property type="component" value="Chromosome"/>
</dbReference>
<dbReference type="GO" id="GO:0030288">
    <property type="term" value="C:outer membrane-bounded periplasmic space"/>
    <property type="evidence" value="ECO:0000318"/>
    <property type="project" value="GO_Central"/>
</dbReference>
<dbReference type="GO" id="GO:0015803">
    <property type="term" value="P:branched-chain amino acid transport"/>
    <property type="evidence" value="ECO:0000314"/>
    <property type="project" value="PseudoCAP"/>
</dbReference>
<dbReference type="GO" id="GO:0042941">
    <property type="term" value="P:D-alanine transmembrane transport"/>
    <property type="evidence" value="ECO:0000315"/>
    <property type="project" value="PseudoCAP"/>
</dbReference>
<dbReference type="GO" id="GO:0015818">
    <property type="term" value="P:isoleucine transport"/>
    <property type="evidence" value="ECO:0000318"/>
    <property type="project" value="GO_Central"/>
</dbReference>
<dbReference type="GO" id="GO:0015808">
    <property type="term" value="P:L-alanine transport"/>
    <property type="evidence" value="ECO:0000315"/>
    <property type="project" value="PseudoCAP"/>
</dbReference>
<dbReference type="GO" id="GO:1903806">
    <property type="term" value="P:L-isoleucine import across plasma membrane"/>
    <property type="evidence" value="ECO:0000315"/>
    <property type="project" value="PseudoCAP"/>
</dbReference>
<dbReference type="GO" id="GO:0015820">
    <property type="term" value="P:L-leucine transport"/>
    <property type="evidence" value="ECO:0000318"/>
    <property type="project" value="GO_Central"/>
</dbReference>
<dbReference type="GO" id="GO:1903805">
    <property type="term" value="P:L-valine import across plasma membrane"/>
    <property type="evidence" value="ECO:0000315"/>
    <property type="project" value="PseudoCAP"/>
</dbReference>
<dbReference type="GO" id="GO:0015829">
    <property type="term" value="P:valine transport"/>
    <property type="evidence" value="ECO:0000318"/>
    <property type="project" value="GO_Central"/>
</dbReference>
<dbReference type="CDD" id="cd06342">
    <property type="entry name" value="PBP1_ABC_LIVBP-like"/>
    <property type="match status" value="1"/>
</dbReference>
<dbReference type="Gene3D" id="3.40.50.2300">
    <property type="match status" value="2"/>
</dbReference>
<dbReference type="InterPro" id="IPR028081">
    <property type="entry name" value="Leu-bd"/>
</dbReference>
<dbReference type="InterPro" id="IPR000709">
    <property type="entry name" value="Leu_Ile_Val-bd"/>
</dbReference>
<dbReference type="InterPro" id="IPR028082">
    <property type="entry name" value="Peripla_BP_I"/>
</dbReference>
<dbReference type="NCBIfam" id="NF011933">
    <property type="entry name" value="PRK15404.1"/>
    <property type="match status" value="1"/>
</dbReference>
<dbReference type="PANTHER" id="PTHR47151">
    <property type="entry name" value="LEU/ILE/VAL-BINDING ABC TRANSPORTER SUBUNIT"/>
    <property type="match status" value="1"/>
</dbReference>
<dbReference type="PANTHER" id="PTHR47151:SF3">
    <property type="entry name" value="LEUCINE-SPECIFIC-BINDING PROTEIN"/>
    <property type="match status" value="1"/>
</dbReference>
<dbReference type="Pfam" id="PF13458">
    <property type="entry name" value="Peripla_BP_6"/>
    <property type="match status" value="1"/>
</dbReference>
<dbReference type="PRINTS" id="PR00337">
    <property type="entry name" value="LEUILEVALBP"/>
</dbReference>
<dbReference type="SUPFAM" id="SSF53822">
    <property type="entry name" value="Periplasmic binding protein-like I"/>
    <property type="match status" value="1"/>
</dbReference>
<protein>
    <recommendedName>
        <fullName>Leucine-, isoleucine-, valine-, threonine-, and alanine-binding protein</fullName>
        <shortName>LIVAT-BP</shortName>
        <shortName>Leu/Ile/Val/Thr/Ala-binding protein</shortName>
    </recommendedName>
</protein>
<organism>
    <name type="scientific">Pseudomonas aeruginosa (strain ATCC 15692 / DSM 22644 / CIP 104116 / JCM 14847 / LMG 12228 / 1C / PRS 101 / PAO1)</name>
    <dbReference type="NCBI Taxonomy" id="208964"/>
    <lineage>
        <taxon>Bacteria</taxon>
        <taxon>Pseudomonadati</taxon>
        <taxon>Pseudomonadota</taxon>
        <taxon>Gammaproteobacteria</taxon>
        <taxon>Pseudomonadales</taxon>
        <taxon>Pseudomonadaceae</taxon>
        <taxon>Pseudomonas</taxon>
    </lineage>
</organism>
<keyword id="KW-0029">Amino-acid transport</keyword>
<keyword id="KW-0903">Direct protein sequencing</keyword>
<keyword id="KW-1015">Disulfide bond</keyword>
<keyword id="KW-0574">Periplasm</keyword>
<keyword id="KW-1185">Reference proteome</keyword>
<keyword id="KW-0732">Signal</keyword>
<keyword id="KW-0813">Transport</keyword>